<keyword id="KW-0444">Lipid biosynthesis</keyword>
<keyword id="KW-0443">Lipid metabolism</keyword>
<keyword id="KW-0472">Membrane</keyword>
<keyword id="KW-0521">NADP</keyword>
<keyword id="KW-0560">Oxidoreductase</keyword>
<keyword id="KW-1185">Reference proteome</keyword>
<keyword id="KW-0752">Steroid biosynthesis</keyword>
<keyword id="KW-0753">Steroid metabolism</keyword>
<keyword id="KW-0756">Sterol biosynthesis</keyword>
<keyword id="KW-1207">Sterol metabolism</keyword>
<keyword id="KW-0812">Transmembrane</keyword>
<keyword id="KW-1133">Transmembrane helix</keyword>
<name>ERG24_DICDI</name>
<proteinExistence type="inferred from homology"/>
<feature type="chain" id="PRO_0000331122" description="Delta(14)-sterol reductase">
    <location>
        <begin position="1"/>
        <end position="462"/>
    </location>
</feature>
<feature type="transmembrane region" description="Helical" evidence="3">
    <location>
        <begin position="40"/>
        <end position="60"/>
    </location>
</feature>
<feature type="transmembrane region" description="Helical" evidence="3">
    <location>
        <begin position="103"/>
        <end position="123"/>
    </location>
</feature>
<feature type="transmembrane region" description="Helical" evidence="3">
    <location>
        <begin position="143"/>
        <end position="163"/>
    </location>
</feature>
<feature type="transmembrane region" description="Helical" evidence="3">
    <location>
        <begin position="172"/>
        <end position="192"/>
    </location>
</feature>
<feature type="transmembrane region" description="Helical" evidence="3">
    <location>
        <begin position="253"/>
        <end position="273"/>
    </location>
</feature>
<feature type="transmembrane region" description="Helical" evidence="3">
    <location>
        <begin position="293"/>
        <end position="313"/>
    </location>
</feature>
<feature type="transmembrane region" description="Helical" evidence="3">
    <location>
        <begin position="327"/>
        <end position="347"/>
    </location>
</feature>
<feature type="binding site" evidence="2">
    <location>
        <position position="354"/>
    </location>
    <ligand>
        <name>NADP(+)</name>
        <dbReference type="ChEBI" id="CHEBI:58349"/>
    </ligand>
</feature>
<feature type="binding site" evidence="2">
    <location>
        <position position="358"/>
    </location>
    <ligand>
        <name>NADP(+)</name>
        <dbReference type="ChEBI" id="CHEBI:58349"/>
    </ligand>
</feature>
<feature type="binding site" evidence="2">
    <location>
        <position position="382"/>
    </location>
    <ligand>
        <name>NADP(+)</name>
        <dbReference type="ChEBI" id="CHEBI:58349"/>
    </ligand>
</feature>
<feature type="binding site" evidence="2">
    <location>
        <position position="387"/>
    </location>
    <ligand>
        <name>NADP(+)</name>
        <dbReference type="ChEBI" id="CHEBI:58349"/>
    </ligand>
</feature>
<feature type="binding site" evidence="2">
    <location>
        <begin position="394"/>
        <end position="395"/>
    </location>
    <ligand>
        <name>NADP(+)</name>
        <dbReference type="ChEBI" id="CHEBI:58349"/>
    </ligand>
</feature>
<feature type="binding site" evidence="2">
    <location>
        <position position="434"/>
    </location>
    <ligand>
        <name>NADP(+)</name>
        <dbReference type="ChEBI" id="CHEBI:58349"/>
    </ligand>
</feature>
<feature type="binding site" evidence="2">
    <location>
        <begin position="438"/>
        <end position="442"/>
    </location>
    <ligand>
        <name>NADP(+)</name>
        <dbReference type="ChEBI" id="CHEBI:58349"/>
    </ligand>
</feature>
<feature type="binding site" evidence="2">
    <location>
        <position position="449"/>
    </location>
    <ligand>
        <name>NADP(+)</name>
        <dbReference type="ChEBI" id="CHEBI:58349"/>
    </ligand>
</feature>
<evidence type="ECO:0000250" key="1"/>
<evidence type="ECO:0000250" key="2">
    <source>
        <dbReference type="UniProtKB" id="G4SW86"/>
    </source>
</evidence>
<evidence type="ECO:0000255" key="3"/>
<evidence type="ECO:0000305" key="4"/>
<accession>Q54PP1</accession>
<protein>
    <recommendedName>
        <fullName>Delta(14)-sterol reductase</fullName>
        <ecNumber>1.3.1.70</ecNumber>
    </recommendedName>
    <alternativeName>
        <fullName>C-14 sterol reductase</fullName>
    </alternativeName>
    <alternativeName>
        <fullName>Sterol C14-reductase</fullName>
    </alternativeName>
</protein>
<sequence>MSAVRNRNNVEKQSNNGAQLTEVQKKELADLQKVHPANEFGGIIGTFLLTFILPVVVYWIWASIEFNNGYLLRPETLSVEGVKAFLAQLYHYVITYAYPTKEAAIIYFSWFGFQAFLQHVVPGRKVLGSPLPGGARLEYTLNGWASWWITLIVIPIAIYFGLFKATILIDNYAPMMTVVNIWSFVFTFLLKIHAKLKGEEERMSGHFFYDFWMGFARNPRIGSFDLKLFCEARPGLILWVLMNFSIAAKQLEVYGEISLSVILVCCFHFWYIADYYYHEEAILTTMDIITEKFGYMLVYGDLSWVPFTYCFQCYYLYKHLVNGAPLHISIGYAIFVVSLKCFGFYLFRWVNSQKHDFRRNPEAPVWGKPAEFILTKRGTKLLCSGFWGICRHLNYTGDIILSWAWCLPCQFDSLAPYFYGIYFTSLDLHRCWRDHNACLVKYGDDWRAYCKRVPYNFIPGLI</sequence>
<reference key="1">
    <citation type="journal article" date="2005" name="Nature">
        <title>The genome of the social amoeba Dictyostelium discoideum.</title>
        <authorList>
            <person name="Eichinger L."/>
            <person name="Pachebat J.A."/>
            <person name="Gloeckner G."/>
            <person name="Rajandream M.A."/>
            <person name="Sucgang R."/>
            <person name="Berriman M."/>
            <person name="Song J."/>
            <person name="Olsen R."/>
            <person name="Szafranski K."/>
            <person name="Xu Q."/>
            <person name="Tunggal B."/>
            <person name="Kummerfeld S."/>
            <person name="Madera M."/>
            <person name="Konfortov B.A."/>
            <person name="Rivero F."/>
            <person name="Bankier A.T."/>
            <person name="Lehmann R."/>
            <person name="Hamlin N."/>
            <person name="Davies R."/>
            <person name="Gaudet P."/>
            <person name="Fey P."/>
            <person name="Pilcher K."/>
            <person name="Chen G."/>
            <person name="Saunders D."/>
            <person name="Sodergren E.J."/>
            <person name="Davis P."/>
            <person name="Kerhornou A."/>
            <person name="Nie X."/>
            <person name="Hall N."/>
            <person name="Anjard C."/>
            <person name="Hemphill L."/>
            <person name="Bason N."/>
            <person name="Farbrother P."/>
            <person name="Desany B."/>
            <person name="Just E."/>
            <person name="Morio T."/>
            <person name="Rost R."/>
            <person name="Churcher C.M."/>
            <person name="Cooper J."/>
            <person name="Haydock S."/>
            <person name="van Driessche N."/>
            <person name="Cronin A."/>
            <person name="Goodhead I."/>
            <person name="Muzny D.M."/>
            <person name="Mourier T."/>
            <person name="Pain A."/>
            <person name="Lu M."/>
            <person name="Harper D."/>
            <person name="Lindsay R."/>
            <person name="Hauser H."/>
            <person name="James K.D."/>
            <person name="Quiles M."/>
            <person name="Madan Babu M."/>
            <person name="Saito T."/>
            <person name="Buchrieser C."/>
            <person name="Wardroper A."/>
            <person name="Felder M."/>
            <person name="Thangavelu M."/>
            <person name="Johnson D."/>
            <person name="Knights A."/>
            <person name="Loulseged H."/>
            <person name="Mungall K.L."/>
            <person name="Oliver K."/>
            <person name="Price C."/>
            <person name="Quail M.A."/>
            <person name="Urushihara H."/>
            <person name="Hernandez J."/>
            <person name="Rabbinowitsch E."/>
            <person name="Steffen D."/>
            <person name="Sanders M."/>
            <person name="Ma J."/>
            <person name="Kohara Y."/>
            <person name="Sharp S."/>
            <person name="Simmonds M.N."/>
            <person name="Spiegler S."/>
            <person name="Tivey A."/>
            <person name="Sugano S."/>
            <person name="White B."/>
            <person name="Walker D."/>
            <person name="Woodward J.R."/>
            <person name="Winckler T."/>
            <person name="Tanaka Y."/>
            <person name="Shaulsky G."/>
            <person name="Schleicher M."/>
            <person name="Weinstock G.M."/>
            <person name="Rosenthal A."/>
            <person name="Cox E.C."/>
            <person name="Chisholm R.L."/>
            <person name="Gibbs R.A."/>
            <person name="Loomis W.F."/>
            <person name="Platzer M."/>
            <person name="Kay R.R."/>
            <person name="Williams J.G."/>
            <person name="Dear P.H."/>
            <person name="Noegel A.A."/>
            <person name="Barrell B.G."/>
            <person name="Kuspa A."/>
        </authorList>
    </citation>
    <scope>NUCLEOTIDE SEQUENCE [LARGE SCALE GENOMIC DNA]</scope>
    <source>
        <strain>AX4</strain>
    </source>
</reference>
<comment type="function">
    <text evidence="1">Reduces the C14=C15 double bond of 4,4-dimethyl-cholesta-8,14,24-trienol to produce 4,4-dimethyl-cholesta-8,24-dienol.</text>
</comment>
<comment type="catalytic activity">
    <reaction>
        <text>4,4-dimethyl-5alpha-cholesta-8,24-dien-3beta-ol + NADP(+) = 4,4-dimethyl-5alpha-cholesta-8,14,24-trien-3beta-ol + NADPH + H(+)</text>
        <dbReference type="Rhea" id="RHEA:18561"/>
        <dbReference type="ChEBI" id="CHEBI:15378"/>
        <dbReference type="ChEBI" id="CHEBI:17813"/>
        <dbReference type="ChEBI" id="CHEBI:18364"/>
        <dbReference type="ChEBI" id="CHEBI:57783"/>
        <dbReference type="ChEBI" id="CHEBI:58349"/>
        <dbReference type="EC" id="1.3.1.70"/>
    </reaction>
</comment>
<comment type="pathway">
    <text>Steroid biosynthesis; zymosterol biosynthesis; zymosterol from lanosterol: step 2/6.</text>
</comment>
<comment type="subcellular location">
    <subcellularLocation>
        <location evidence="4">Membrane</location>
        <topology evidence="4">Multi-pass membrane protein</topology>
    </subcellularLocation>
</comment>
<comment type="similarity">
    <text evidence="4">Belongs to the ERG4/ERG24 family.</text>
</comment>
<dbReference type="EC" id="1.3.1.70"/>
<dbReference type="EMBL" id="AAFI02000064">
    <property type="protein sequence ID" value="EAL65252.1"/>
    <property type="molecule type" value="Genomic_DNA"/>
</dbReference>
<dbReference type="RefSeq" id="XP_638613.1">
    <property type="nucleotide sequence ID" value="XM_633521.1"/>
</dbReference>
<dbReference type="SMR" id="Q54PP1"/>
<dbReference type="FunCoup" id="Q54PP1">
    <property type="interactions" value="212"/>
</dbReference>
<dbReference type="STRING" id="44689.Q54PP1"/>
<dbReference type="TCDB" id="1.I.1.1.5">
    <property type="family name" value="the nuclear pore complex (npc) family"/>
</dbReference>
<dbReference type="PaxDb" id="44689-DDB0232079"/>
<dbReference type="EnsemblProtists" id="EAL65252">
    <property type="protein sequence ID" value="EAL65252"/>
    <property type="gene ID" value="DDB_G0284407"/>
</dbReference>
<dbReference type="GeneID" id="8624584"/>
<dbReference type="KEGG" id="ddi:DDB_G0284407"/>
<dbReference type="dictyBase" id="DDB_G0284407">
    <property type="gene designation" value="erg24"/>
</dbReference>
<dbReference type="VEuPathDB" id="AmoebaDB:DDB_G0284407"/>
<dbReference type="eggNOG" id="KOG1435">
    <property type="taxonomic scope" value="Eukaryota"/>
</dbReference>
<dbReference type="HOGENOM" id="CLU_015631_0_3_1"/>
<dbReference type="InParanoid" id="Q54PP1"/>
<dbReference type="OMA" id="EWCELRP"/>
<dbReference type="PhylomeDB" id="Q54PP1"/>
<dbReference type="Reactome" id="R-DDI-191273">
    <property type="pathway name" value="Cholesterol biosynthesis"/>
</dbReference>
<dbReference type="UniPathway" id="UPA00770">
    <property type="reaction ID" value="UER00755"/>
</dbReference>
<dbReference type="PRO" id="PR:Q54PP1"/>
<dbReference type="Proteomes" id="UP000002195">
    <property type="component" value="Chromosome 4"/>
</dbReference>
<dbReference type="GO" id="GO:0005789">
    <property type="term" value="C:endoplasmic reticulum membrane"/>
    <property type="evidence" value="ECO:0000314"/>
    <property type="project" value="dictyBase"/>
</dbReference>
<dbReference type="GO" id="GO:0005640">
    <property type="term" value="C:nuclear outer membrane"/>
    <property type="evidence" value="ECO:0000314"/>
    <property type="project" value="dictyBase"/>
</dbReference>
<dbReference type="GO" id="GO:0050613">
    <property type="term" value="F:Delta14-sterol reductase activity"/>
    <property type="evidence" value="ECO:0007669"/>
    <property type="project" value="UniProtKB-EC"/>
</dbReference>
<dbReference type="GO" id="GO:0000246">
    <property type="term" value="F:Delta24(24-1) sterol reductase activity"/>
    <property type="evidence" value="ECO:0000318"/>
    <property type="project" value="GO_Central"/>
</dbReference>
<dbReference type="GO" id="GO:0050661">
    <property type="term" value="F:NADP binding"/>
    <property type="evidence" value="ECO:0000250"/>
    <property type="project" value="UniProtKB"/>
</dbReference>
<dbReference type="GO" id="GO:0006696">
    <property type="term" value="P:ergosterol biosynthetic process"/>
    <property type="evidence" value="ECO:0000318"/>
    <property type="project" value="GO_Central"/>
</dbReference>
<dbReference type="FunFam" id="1.20.120.1630:FF:000011">
    <property type="entry name" value="Delta(14)-sterol reductase"/>
    <property type="match status" value="1"/>
</dbReference>
<dbReference type="Gene3D" id="1.20.120.1630">
    <property type="match status" value="1"/>
</dbReference>
<dbReference type="InterPro" id="IPR001171">
    <property type="entry name" value="ERG24_DHCR-like"/>
</dbReference>
<dbReference type="PANTHER" id="PTHR21257">
    <property type="entry name" value="DELTA(14)-STEROL REDUCTASE"/>
    <property type="match status" value="1"/>
</dbReference>
<dbReference type="PANTHER" id="PTHR21257:SF31">
    <property type="entry name" value="DELTA(24(24(1)))-STEROL REDUCTASE ERG4"/>
    <property type="match status" value="1"/>
</dbReference>
<dbReference type="Pfam" id="PF01222">
    <property type="entry name" value="ERG4_ERG24"/>
    <property type="match status" value="1"/>
</dbReference>
<gene>
    <name type="primary">erg24</name>
    <name type="ORF">DDB_G0284407</name>
</gene>
<organism>
    <name type="scientific">Dictyostelium discoideum</name>
    <name type="common">Social amoeba</name>
    <dbReference type="NCBI Taxonomy" id="44689"/>
    <lineage>
        <taxon>Eukaryota</taxon>
        <taxon>Amoebozoa</taxon>
        <taxon>Evosea</taxon>
        <taxon>Eumycetozoa</taxon>
        <taxon>Dictyostelia</taxon>
        <taxon>Dictyosteliales</taxon>
        <taxon>Dictyosteliaceae</taxon>
        <taxon>Dictyostelium</taxon>
    </lineage>
</organism>